<comment type="similarity">
    <text evidence="2">Belongs to the class IV-like SAM-binding methyltransferase superfamily. RNA methyltransferase TrmH family.</text>
</comment>
<sequence length="248" mass="27207">MEDTVIVGRHAVREAIITGHPINKILIQEGIKKQQINEILKNAKDQKIIVQTVPKSKLDFLANAPHQGVAALIAPYEYADFDQFLKQQKEKEGLLTVLILDGLEDPHNLGSILRTADATGVDGVIIPKRRSVTLTQTVAKASTGAIEHVPVIRVTNLAKTIDELKDNGFWVAGTEANNATDYRNLEADMSLAIVIGSEGQGMSRLVSDKCDFYIKIPMVGHVNSLNASVAASLMMYEVFRKRHDVGEI</sequence>
<reference key="1">
    <citation type="journal article" date="2005" name="J. Bacteriol.">
        <title>Insights on evolution of virulence and resistance from the complete genome analysis of an early methicillin-resistant Staphylococcus aureus strain and a biofilm-producing methicillin-resistant Staphylococcus epidermidis strain.</title>
        <authorList>
            <person name="Gill S.R."/>
            <person name="Fouts D.E."/>
            <person name="Archer G.L."/>
            <person name="Mongodin E.F."/>
            <person name="DeBoy R.T."/>
            <person name="Ravel J."/>
            <person name="Paulsen I.T."/>
            <person name="Kolonay J.F."/>
            <person name="Brinkac L.M."/>
            <person name="Beanan M.J."/>
            <person name="Dodson R.J."/>
            <person name="Daugherty S.C."/>
            <person name="Madupu R."/>
            <person name="Angiuoli S.V."/>
            <person name="Durkin A.S."/>
            <person name="Haft D.H."/>
            <person name="Vamathevan J.J."/>
            <person name="Khouri H."/>
            <person name="Utterback T.R."/>
            <person name="Lee C."/>
            <person name="Dimitrov G."/>
            <person name="Jiang L."/>
            <person name="Qin H."/>
            <person name="Weidman J."/>
            <person name="Tran K."/>
            <person name="Kang K.H."/>
            <person name="Hance I.R."/>
            <person name="Nelson K.E."/>
            <person name="Fraser C.M."/>
        </authorList>
    </citation>
    <scope>NUCLEOTIDE SEQUENCE [LARGE SCALE GENOMIC DNA]</scope>
    <source>
        <strain>COL</strain>
    </source>
</reference>
<dbReference type="EC" id="2.1.1.-"/>
<dbReference type="EMBL" id="CP000046">
    <property type="protein sequence ID" value="AAW37688.1"/>
    <property type="molecule type" value="Genomic_DNA"/>
</dbReference>
<dbReference type="SMR" id="Q5HIE3"/>
<dbReference type="KEGG" id="sac:SACOL0578"/>
<dbReference type="HOGENOM" id="CLU_021322_0_1_9"/>
<dbReference type="Proteomes" id="UP000000530">
    <property type="component" value="Chromosome"/>
</dbReference>
<dbReference type="GO" id="GO:0005829">
    <property type="term" value="C:cytosol"/>
    <property type="evidence" value="ECO:0007669"/>
    <property type="project" value="TreeGrafter"/>
</dbReference>
<dbReference type="GO" id="GO:0003723">
    <property type="term" value="F:RNA binding"/>
    <property type="evidence" value="ECO:0007669"/>
    <property type="project" value="InterPro"/>
</dbReference>
<dbReference type="GO" id="GO:0008173">
    <property type="term" value="F:RNA methyltransferase activity"/>
    <property type="evidence" value="ECO:0007669"/>
    <property type="project" value="InterPro"/>
</dbReference>
<dbReference type="GO" id="GO:0032259">
    <property type="term" value="P:methylation"/>
    <property type="evidence" value="ECO:0007669"/>
    <property type="project" value="UniProtKB-KW"/>
</dbReference>
<dbReference type="GO" id="GO:0006396">
    <property type="term" value="P:RNA processing"/>
    <property type="evidence" value="ECO:0007669"/>
    <property type="project" value="InterPro"/>
</dbReference>
<dbReference type="CDD" id="cd18103">
    <property type="entry name" value="SpoU-like_RlmB"/>
    <property type="match status" value="1"/>
</dbReference>
<dbReference type="FunFam" id="3.40.1280.10:FF:000008">
    <property type="entry name" value="Group 3 RNA methyltransferase TrmH"/>
    <property type="match status" value="1"/>
</dbReference>
<dbReference type="Gene3D" id="3.30.1330.30">
    <property type="match status" value="1"/>
</dbReference>
<dbReference type="Gene3D" id="3.40.1280.10">
    <property type="match status" value="1"/>
</dbReference>
<dbReference type="InterPro" id="IPR029028">
    <property type="entry name" value="Alpha/beta_knot_MTases"/>
</dbReference>
<dbReference type="InterPro" id="IPR029064">
    <property type="entry name" value="Ribosomal_eL30-like_sf"/>
</dbReference>
<dbReference type="InterPro" id="IPR004441">
    <property type="entry name" value="rRNA_MeTrfase_TrmH"/>
</dbReference>
<dbReference type="InterPro" id="IPR001537">
    <property type="entry name" value="SpoU_MeTrfase"/>
</dbReference>
<dbReference type="InterPro" id="IPR013123">
    <property type="entry name" value="SpoU_subst-bd"/>
</dbReference>
<dbReference type="InterPro" id="IPR029026">
    <property type="entry name" value="tRNA_m1G_MTases_N"/>
</dbReference>
<dbReference type="NCBIfam" id="TIGR00186">
    <property type="entry name" value="rRNA_methyl_3"/>
    <property type="match status" value="1"/>
</dbReference>
<dbReference type="PANTHER" id="PTHR46429">
    <property type="entry name" value="23S RRNA (GUANOSINE-2'-O-)-METHYLTRANSFERASE RLMB"/>
    <property type="match status" value="1"/>
</dbReference>
<dbReference type="PANTHER" id="PTHR46429:SF1">
    <property type="entry name" value="23S RRNA (GUANOSINE-2'-O-)-METHYLTRANSFERASE RLMB"/>
    <property type="match status" value="1"/>
</dbReference>
<dbReference type="Pfam" id="PF00588">
    <property type="entry name" value="SpoU_methylase"/>
    <property type="match status" value="1"/>
</dbReference>
<dbReference type="Pfam" id="PF08032">
    <property type="entry name" value="SpoU_sub_bind"/>
    <property type="match status" value="1"/>
</dbReference>
<dbReference type="SMART" id="SM00967">
    <property type="entry name" value="SpoU_sub_bind"/>
    <property type="match status" value="1"/>
</dbReference>
<dbReference type="SUPFAM" id="SSF75217">
    <property type="entry name" value="alpha/beta knot"/>
    <property type="match status" value="1"/>
</dbReference>
<dbReference type="SUPFAM" id="SSF55315">
    <property type="entry name" value="L30e-like"/>
    <property type="match status" value="1"/>
</dbReference>
<keyword id="KW-0489">Methyltransferase</keyword>
<keyword id="KW-0808">Transferase</keyword>
<name>TRMHL_STAAC</name>
<protein>
    <recommendedName>
        <fullName>Putative TrmH family tRNA/rRNA methyltransferase</fullName>
        <ecNumber>2.1.1.-</ecNumber>
    </recommendedName>
</protein>
<evidence type="ECO:0000250" key="1"/>
<evidence type="ECO:0000305" key="2"/>
<accession>Q5HIE3</accession>
<gene>
    <name type="ordered locus">SACOL0578</name>
</gene>
<organism>
    <name type="scientific">Staphylococcus aureus (strain COL)</name>
    <dbReference type="NCBI Taxonomy" id="93062"/>
    <lineage>
        <taxon>Bacteria</taxon>
        <taxon>Bacillati</taxon>
        <taxon>Bacillota</taxon>
        <taxon>Bacilli</taxon>
        <taxon>Bacillales</taxon>
        <taxon>Staphylococcaceae</taxon>
        <taxon>Staphylococcus</taxon>
    </lineage>
</organism>
<feature type="chain" id="PRO_0000224825" description="Putative TrmH family tRNA/rRNA methyltransferase">
    <location>
        <begin position="1"/>
        <end position="248"/>
    </location>
</feature>
<feature type="binding site" evidence="1">
    <location>
        <position position="196"/>
    </location>
    <ligand>
        <name>S-adenosyl-L-methionine</name>
        <dbReference type="ChEBI" id="CHEBI:59789"/>
    </ligand>
</feature>
<feature type="binding site" evidence="1">
    <location>
        <position position="216"/>
    </location>
    <ligand>
        <name>S-adenosyl-L-methionine</name>
        <dbReference type="ChEBI" id="CHEBI:59789"/>
    </ligand>
</feature>
<feature type="binding site" evidence="1">
    <location>
        <position position="225"/>
    </location>
    <ligand>
        <name>S-adenosyl-L-methionine</name>
        <dbReference type="ChEBI" id="CHEBI:59789"/>
    </ligand>
</feature>
<proteinExistence type="inferred from homology"/>